<accession>P23533</accession>
<accession>B9DQ26</accession>
<evidence type="ECO:0000250" key="1">
    <source>
        <dbReference type="UniProtKB" id="P08839"/>
    </source>
</evidence>
<evidence type="ECO:0000269" key="2">
    <source>
    </source>
</evidence>
<evidence type="ECO:0000269" key="3">
    <source>
    </source>
</evidence>
<evidence type="ECO:0000303" key="4">
    <source>
    </source>
</evidence>
<evidence type="ECO:0000305" key="5"/>
<evidence type="ECO:0000305" key="6">
    <source>
    </source>
</evidence>
<evidence type="ECO:0000305" key="7">
    <source>
    </source>
</evidence>
<evidence type="ECO:0007829" key="8">
    <source>
        <dbReference type="PDB" id="2HRO"/>
    </source>
</evidence>
<proteinExistence type="evidence at protein level"/>
<name>PT1_STACT</name>
<keyword id="KW-0002">3D-structure</keyword>
<keyword id="KW-0963">Cytoplasm</keyword>
<keyword id="KW-0418">Kinase</keyword>
<keyword id="KW-0460">Magnesium</keyword>
<keyword id="KW-0479">Metal-binding</keyword>
<keyword id="KW-0598">Phosphotransferase system</keyword>
<keyword id="KW-1185">Reference proteome</keyword>
<keyword id="KW-0762">Sugar transport</keyword>
<keyword id="KW-0808">Transferase</keyword>
<keyword id="KW-0813">Transport</keyword>
<protein>
    <recommendedName>
        <fullName evidence="4">Phosphoenolpyruvate-protein phosphotransferase</fullName>
        <ecNumber evidence="2">2.7.3.9</ecNumber>
    </recommendedName>
    <alternativeName>
        <fullName evidence="4">Phosphotransferase system, enzyme I</fullName>
    </alternativeName>
</protein>
<comment type="function">
    <text evidence="2">General (non sugar-specific) component of the phosphoenolpyruvate-dependent sugar phosphotransferase system (sugar PTS). This major carbohydrate active-transport system catalyzes the phosphorylation of incoming sugar substrates concomitantly with their translocation across the cell membrane. Enzyme I transfers the phosphoryl group from phosphoenolpyruvate (PEP) to the phosphoryl carrier protein (HPr).</text>
</comment>
<comment type="catalytic activity">
    <reaction evidence="2">
        <text>L-histidyl-[protein] + phosphoenolpyruvate = N(pros)-phospho-L-histidyl-[protein] + pyruvate</text>
        <dbReference type="Rhea" id="RHEA:23880"/>
        <dbReference type="Rhea" id="RHEA-COMP:9745"/>
        <dbReference type="Rhea" id="RHEA-COMP:9746"/>
        <dbReference type="ChEBI" id="CHEBI:15361"/>
        <dbReference type="ChEBI" id="CHEBI:29979"/>
        <dbReference type="ChEBI" id="CHEBI:58702"/>
        <dbReference type="ChEBI" id="CHEBI:64837"/>
        <dbReference type="EC" id="2.7.3.9"/>
    </reaction>
</comment>
<comment type="cofactor">
    <cofactor evidence="1 6">
        <name>Mg(2+)</name>
        <dbReference type="ChEBI" id="CHEBI:18420"/>
    </cofactor>
</comment>
<comment type="biophysicochemical properties">
    <kinetics>
        <KM evidence="2">0.44 uM for PEP</KM>
    </kinetics>
</comment>
<comment type="subunit">
    <text evidence="3">Homodimer.</text>
</comment>
<comment type="subcellular location">
    <subcellularLocation>
        <location evidence="5">Cytoplasm</location>
    </subcellularLocation>
</comment>
<comment type="domain">
    <text evidence="1">The N-terminal domain contains the HPr binding site, the central domain the pyrophosphate/phosphate carrier histidine, and the C-terminal domain the pyruvate binding site.</text>
</comment>
<comment type="miscellaneous">
    <text evidence="1">The reaction takes place in three steps, mediated by a phosphocarrier histidine residue located on the surface of the central domain. The two first partial reactions are catalyzed at an active site located on the N-terminal domain, and the third partial reaction is catalyzed at an active site located on the C-terminal domain. For catalytic turnover, the central domain swivels from the concave surface of the N-terminal domain to that of the C-terminal domain.</text>
</comment>
<comment type="similarity">
    <text evidence="5">Belongs to the PEP-utilizing enzyme family.</text>
</comment>
<dbReference type="EC" id="2.7.3.9" evidence="2"/>
<dbReference type="EMBL" id="M69050">
    <property type="protein sequence ID" value="AAA26664.1"/>
    <property type="molecule type" value="Genomic_DNA"/>
</dbReference>
<dbReference type="EMBL" id="AM295250">
    <property type="protein sequence ID" value="CAL27616.1"/>
    <property type="molecule type" value="Genomic_DNA"/>
</dbReference>
<dbReference type="EMBL" id="X60766">
    <property type="protein sequence ID" value="CAA43176.1"/>
    <property type="molecule type" value="Genomic_DNA"/>
</dbReference>
<dbReference type="PIR" id="B42374">
    <property type="entry name" value="B42374"/>
</dbReference>
<dbReference type="RefSeq" id="WP_015899959.1">
    <property type="nucleotide sequence ID" value="NC_012121.1"/>
</dbReference>
<dbReference type="PDB" id="2HRO">
    <property type="method" value="X-ray"/>
    <property type="resolution" value="2.50 A"/>
    <property type="chains" value="A=1-573"/>
</dbReference>
<dbReference type="PDBsum" id="2HRO"/>
<dbReference type="SMR" id="P23533"/>
<dbReference type="GeneID" id="93795643"/>
<dbReference type="KEGG" id="sca:SCA_0705"/>
<dbReference type="eggNOG" id="COG1080">
    <property type="taxonomic scope" value="Bacteria"/>
</dbReference>
<dbReference type="HOGENOM" id="CLU_007308_7_0_9"/>
<dbReference type="OrthoDB" id="9765468at2"/>
<dbReference type="BioCyc" id="SCAR396513:SCA_RS03580-MONOMER"/>
<dbReference type="BRENDA" id="2.7.3.9">
    <property type="organism ID" value="5873"/>
</dbReference>
<dbReference type="SABIO-RK" id="P23533"/>
<dbReference type="EvolutionaryTrace" id="P23533"/>
<dbReference type="Proteomes" id="UP000000444">
    <property type="component" value="Chromosome"/>
</dbReference>
<dbReference type="GO" id="GO:0005737">
    <property type="term" value="C:cytoplasm"/>
    <property type="evidence" value="ECO:0007669"/>
    <property type="project" value="UniProtKB-SubCell"/>
</dbReference>
<dbReference type="GO" id="GO:0016301">
    <property type="term" value="F:kinase activity"/>
    <property type="evidence" value="ECO:0007669"/>
    <property type="project" value="UniProtKB-KW"/>
</dbReference>
<dbReference type="GO" id="GO:0046872">
    <property type="term" value="F:metal ion binding"/>
    <property type="evidence" value="ECO:0007669"/>
    <property type="project" value="UniProtKB-KW"/>
</dbReference>
<dbReference type="GO" id="GO:0008965">
    <property type="term" value="F:phosphoenolpyruvate-protein phosphotransferase activity"/>
    <property type="evidence" value="ECO:0007669"/>
    <property type="project" value="UniProtKB-EC"/>
</dbReference>
<dbReference type="GO" id="GO:0009401">
    <property type="term" value="P:phosphoenolpyruvate-dependent sugar phosphotransferase system"/>
    <property type="evidence" value="ECO:0007669"/>
    <property type="project" value="UniProtKB-KW"/>
</dbReference>
<dbReference type="FunFam" id="1.10.274.10:FF:000001">
    <property type="entry name" value="Phosphoenolpyruvate-protein phosphotransferase"/>
    <property type="match status" value="1"/>
</dbReference>
<dbReference type="FunFam" id="3.20.20.60:FF:000007">
    <property type="entry name" value="Phosphoenolpyruvate-protein phosphotransferase"/>
    <property type="match status" value="1"/>
</dbReference>
<dbReference type="Gene3D" id="3.20.20.60">
    <property type="entry name" value="Phosphoenolpyruvate-binding domains"/>
    <property type="match status" value="1"/>
</dbReference>
<dbReference type="Gene3D" id="3.50.30.10">
    <property type="entry name" value="Phosphohistidine domain"/>
    <property type="match status" value="1"/>
</dbReference>
<dbReference type="Gene3D" id="1.10.274.10">
    <property type="entry name" value="PtsI, HPr-binding domain"/>
    <property type="match status" value="1"/>
</dbReference>
<dbReference type="InterPro" id="IPR008279">
    <property type="entry name" value="PEP-util_enz_mobile_dom"/>
</dbReference>
<dbReference type="InterPro" id="IPR050499">
    <property type="entry name" value="PEP-utilizing_PTS_enzyme"/>
</dbReference>
<dbReference type="InterPro" id="IPR018274">
    <property type="entry name" value="PEP_util_AS"/>
</dbReference>
<dbReference type="InterPro" id="IPR000121">
    <property type="entry name" value="PEP_util_C"/>
</dbReference>
<dbReference type="InterPro" id="IPR023151">
    <property type="entry name" value="PEP_util_CS"/>
</dbReference>
<dbReference type="InterPro" id="IPR036637">
    <property type="entry name" value="Phosphohistidine_dom_sf"/>
</dbReference>
<dbReference type="InterPro" id="IPR024692">
    <property type="entry name" value="PTS_EI"/>
</dbReference>
<dbReference type="InterPro" id="IPR006318">
    <property type="entry name" value="PTS_EI-like"/>
</dbReference>
<dbReference type="InterPro" id="IPR008731">
    <property type="entry name" value="PTS_EIN"/>
</dbReference>
<dbReference type="InterPro" id="IPR036618">
    <property type="entry name" value="PtsI_HPr-bd_sf"/>
</dbReference>
<dbReference type="InterPro" id="IPR015813">
    <property type="entry name" value="Pyrv/PenolPyrv_kinase-like_dom"/>
</dbReference>
<dbReference type="InterPro" id="IPR040442">
    <property type="entry name" value="Pyrv_kinase-like_dom_sf"/>
</dbReference>
<dbReference type="NCBIfam" id="TIGR01417">
    <property type="entry name" value="PTS_I_fam"/>
    <property type="match status" value="1"/>
</dbReference>
<dbReference type="PANTHER" id="PTHR46244">
    <property type="entry name" value="PHOSPHOENOLPYRUVATE-PROTEIN PHOSPHOTRANSFERASE"/>
    <property type="match status" value="1"/>
</dbReference>
<dbReference type="PANTHER" id="PTHR46244:SF3">
    <property type="entry name" value="PHOSPHOENOLPYRUVATE-PROTEIN PHOSPHOTRANSFERASE"/>
    <property type="match status" value="1"/>
</dbReference>
<dbReference type="Pfam" id="PF05524">
    <property type="entry name" value="PEP-utilisers_N"/>
    <property type="match status" value="1"/>
</dbReference>
<dbReference type="Pfam" id="PF00391">
    <property type="entry name" value="PEP-utilizers"/>
    <property type="match status" value="1"/>
</dbReference>
<dbReference type="Pfam" id="PF02896">
    <property type="entry name" value="PEP-utilizers_C"/>
    <property type="match status" value="1"/>
</dbReference>
<dbReference type="PIRSF" id="PIRSF000732">
    <property type="entry name" value="PTS_enzyme_I"/>
    <property type="match status" value="1"/>
</dbReference>
<dbReference type="PRINTS" id="PR01736">
    <property type="entry name" value="PHPHTRNFRASE"/>
</dbReference>
<dbReference type="SUPFAM" id="SSF47831">
    <property type="entry name" value="Enzyme I of the PEP:sugar phosphotransferase system HPr-binding (sub)domain"/>
    <property type="match status" value="1"/>
</dbReference>
<dbReference type="SUPFAM" id="SSF51621">
    <property type="entry name" value="Phosphoenolpyruvate/pyruvate domain"/>
    <property type="match status" value="1"/>
</dbReference>
<dbReference type="SUPFAM" id="SSF52009">
    <property type="entry name" value="Phosphohistidine domain"/>
    <property type="match status" value="1"/>
</dbReference>
<dbReference type="PROSITE" id="PS00742">
    <property type="entry name" value="PEP_ENZYMES_2"/>
    <property type="match status" value="1"/>
</dbReference>
<dbReference type="PROSITE" id="PS00370">
    <property type="entry name" value="PEP_ENZYMES_PHOS_SITE"/>
    <property type="match status" value="1"/>
</dbReference>
<gene>
    <name type="primary">ptsI</name>
    <name type="ordered locus">Sca_0705</name>
</gene>
<feature type="chain" id="PRO_0000147087" description="Phosphoenolpyruvate-protein phosphotransferase">
    <location>
        <begin position="1"/>
        <end position="573"/>
    </location>
</feature>
<feature type="active site" description="Tele-phosphohistidine intermediate" evidence="1 7">
    <location>
        <position position="190"/>
    </location>
</feature>
<feature type="active site" description="Proton donor" evidence="1 7">
    <location>
        <position position="503"/>
    </location>
</feature>
<feature type="binding site" evidence="3">
    <location>
        <position position="297"/>
    </location>
    <ligand>
        <name>substrate</name>
    </ligand>
</feature>
<feature type="binding site" evidence="3">
    <location>
        <position position="333"/>
    </location>
    <ligand>
        <name>substrate</name>
    </ligand>
</feature>
<feature type="binding site" evidence="1">
    <location>
        <position position="432"/>
    </location>
    <ligand>
        <name>Mg(2+)</name>
        <dbReference type="ChEBI" id="CHEBI:18420"/>
    </ligand>
</feature>
<feature type="binding site" evidence="3">
    <location>
        <begin position="455"/>
        <end position="456"/>
    </location>
    <ligand>
        <name>phosphoenolpyruvate</name>
        <dbReference type="ChEBI" id="CHEBI:58702"/>
    </ligand>
</feature>
<feature type="binding site" evidence="1">
    <location>
        <position position="456"/>
    </location>
    <ligand>
        <name>Mg(2+)</name>
        <dbReference type="ChEBI" id="CHEBI:18420"/>
    </ligand>
</feature>
<feature type="binding site" evidence="3">
    <location>
        <position position="466"/>
    </location>
    <ligand>
        <name>substrate</name>
    </ligand>
</feature>
<feature type="sequence conflict" description="In Ref. 1; AAA26664." evidence="5" ref="1">
    <original>M</original>
    <variation>I</variation>
    <location>
        <position position="124"/>
    </location>
</feature>
<feature type="sequence conflict" description="In Ref. 1; AAA26664." evidence="5" ref="1">
    <original>A</original>
    <variation>AK</variation>
    <location>
        <position position="128"/>
    </location>
</feature>
<feature type="sequence conflict" description="In Ref. 1; AAA26664." evidence="5" ref="1">
    <original>LLEEERANLKNEGYE</original>
    <variation>FLKKNVLTLKMKAMK</variation>
    <location>
        <begin position="406"/>
        <end position="420"/>
    </location>
</feature>
<feature type="sequence conflict" description="In Ref. 1; AAA26664." evidence="5" ref="1">
    <original>NPAILR</original>
    <variation>ISNFSF</variation>
    <location>
        <begin position="479"/>
        <end position="484"/>
    </location>
</feature>
<feature type="sequence conflict" description="In Ref. 1; AAA26664." evidence="5" ref="1">
    <original>R</original>
    <variation>V</variation>
    <location>
        <position position="536"/>
    </location>
</feature>
<feature type="strand" evidence="8">
    <location>
        <begin position="10"/>
        <end position="12"/>
    </location>
</feature>
<feature type="helix" evidence="8">
    <location>
        <begin position="37"/>
        <end position="66"/>
    </location>
</feature>
<feature type="strand" evidence="8">
    <location>
        <begin position="68"/>
        <end position="70"/>
    </location>
</feature>
<feature type="helix" evidence="8">
    <location>
        <begin position="73"/>
        <end position="81"/>
    </location>
</feature>
<feature type="helix" evidence="8">
    <location>
        <begin position="84"/>
        <end position="97"/>
    </location>
</feature>
<feature type="helix" evidence="8">
    <location>
        <begin position="101"/>
        <end position="117"/>
    </location>
</feature>
<feature type="helix" evidence="8">
    <location>
        <begin position="124"/>
        <end position="143"/>
    </location>
</feature>
<feature type="turn" evidence="8">
    <location>
        <begin position="166"/>
        <end position="170"/>
    </location>
</feature>
<feature type="turn" evidence="8">
    <location>
        <begin position="174"/>
        <end position="176"/>
    </location>
</feature>
<feature type="helix" evidence="8">
    <location>
        <begin position="190"/>
        <end position="197"/>
    </location>
</feature>
<feature type="helix" evidence="8">
    <location>
        <begin position="209"/>
        <end position="211"/>
    </location>
</feature>
<feature type="turn" evidence="8">
    <location>
        <begin position="236"/>
        <end position="238"/>
    </location>
</feature>
<feature type="helix" evidence="8">
    <location>
        <begin position="239"/>
        <end position="244"/>
    </location>
</feature>
<feature type="helix" evidence="8">
    <location>
        <begin position="247"/>
        <end position="255"/>
    </location>
</feature>
<feature type="helix" evidence="8">
    <location>
        <begin position="256"/>
        <end position="258"/>
    </location>
</feature>
<feature type="strand" evidence="8">
    <location>
        <begin position="271"/>
        <end position="278"/>
    </location>
</feature>
<feature type="helix" evidence="8">
    <location>
        <begin position="279"/>
        <end position="281"/>
    </location>
</feature>
<feature type="helix" evidence="8">
    <location>
        <begin position="282"/>
        <end position="286"/>
    </location>
</feature>
<feature type="turn" evidence="8">
    <location>
        <begin position="287"/>
        <end position="289"/>
    </location>
</feature>
<feature type="strand" evidence="8">
    <location>
        <begin position="291"/>
        <end position="297"/>
    </location>
</feature>
<feature type="helix" evidence="8">
    <location>
        <begin position="299"/>
        <end position="301"/>
    </location>
</feature>
<feature type="helix" evidence="8">
    <location>
        <begin position="311"/>
        <end position="324"/>
    </location>
</feature>
<feature type="turn" evidence="8">
    <location>
        <begin position="325"/>
        <end position="327"/>
    </location>
</feature>
<feature type="strand" evidence="8">
    <location>
        <begin position="329"/>
        <end position="333"/>
    </location>
</feature>
<feature type="strand" evidence="8">
    <location>
        <begin position="344"/>
        <end position="346"/>
    </location>
</feature>
<feature type="helix" evidence="8">
    <location>
        <begin position="354"/>
        <end position="356"/>
    </location>
</feature>
<feature type="strand" evidence="8">
    <location>
        <begin position="357"/>
        <end position="359"/>
    </location>
</feature>
<feature type="helix" evidence="8">
    <location>
        <begin position="361"/>
        <end position="366"/>
    </location>
</feature>
<feature type="helix" evidence="8">
    <location>
        <begin position="368"/>
        <end position="381"/>
    </location>
</feature>
<feature type="helix" evidence="8">
    <location>
        <begin position="382"/>
        <end position="384"/>
    </location>
</feature>
<feature type="strand" evidence="8">
    <location>
        <begin position="385"/>
        <end position="393"/>
    </location>
</feature>
<feature type="helix" evidence="8">
    <location>
        <begin position="397"/>
        <end position="415"/>
    </location>
</feature>
<feature type="turn" evidence="8">
    <location>
        <begin position="416"/>
        <end position="418"/>
    </location>
</feature>
<feature type="strand" evidence="8">
    <location>
        <begin position="426"/>
        <end position="431"/>
    </location>
</feature>
<feature type="helix" evidence="8">
    <location>
        <begin position="434"/>
        <end position="438"/>
    </location>
</feature>
<feature type="helix" evidence="8">
    <location>
        <begin position="440"/>
        <end position="446"/>
    </location>
</feature>
<feature type="strand" evidence="8">
    <location>
        <begin position="448"/>
        <end position="452"/>
    </location>
</feature>
<feature type="helix" evidence="8">
    <location>
        <begin position="454"/>
        <end position="462"/>
    </location>
</feature>
<feature type="helix" evidence="8">
    <location>
        <begin position="472"/>
        <end position="474"/>
    </location>
</feature>
<feature type="helix" evidence="8">
    <location>
        <begin position="480"/>
        <end position="495"/>
    </location>
</feature>
<feature type="strand" evidence="8">
    <location>
        <begin position="499"/>
        <end position="502"/>
    </location>
</feature>
<feature type="helix" evidence="8">
    <location>
        <begin position="505"/>
        <end position="508"/>
    </location>
</feature>
<feature type="turn" evidence="8">
    <location>
        <begin position="510"/>
        <end position="512"/>
    </location>
</feature>
<feature type="helix" evidence="8">
    <location>
        <begin position="513"/>
        <end position="519"/>
    </location>
</feature>
<feature type="strand" evidence="8">
    <location>
        <begin position="522"/>
        <end position="526"/>
    </location>
</feature>
<feature type="helix" evidence="8">
    <location>
        <begin position="528"/>
        <end position="530"/>
    </location>
</feature>
<feature type="helix" evidence="8">
    <location>
        <begin position="531"/>
        <end position="539"/>
    </location>
</feature>
<feature type="helix" evidence="8">
    <location>
        <begin position="543"/>
        <end position="553"/>
    </location>
</feature>
<feature type="helix" evidence="8">
    <location>
        <begin position="559"/>
        <end position="569"/>
    </location>
</feature>
<reference key="1">
    <citation type="journal article" date="1992" name="J. Bacteriol.">
        <title>Staphylococcal phosphoenolpyruvate-dependent phosphotransferase system: molecular cloning and nucleotide sequence of the Staphylococcus carnosus ptsI gene and expression and complementation studies of the gene product.</title>
        <authorList>
            <person name="Kohlbrecher D."/>
            <person name="Eisermann R."/>
            <person name="Hengstenberg W."/>
        </authorList>
    </citation>
    <scope>NUCLEOTIDE SEQUENCE [GENOMIC DNA]</scope>
    <scope>FUNCTION</scope>
    <scope>CATALYTIC ACTIVITY</scope>
    <scope>BIOPHYSICOCHEMICAL PROPERTIES</scope>
    <scope>COFACTOR</scope>
</reference>
<reference key="2">
    <citation type="journal article" date="2009" name="Appl. Environ. Microbiol.">
        <title>Genome analysis of the meat starter culture bacterium Staphylococcus carnosus TM300.</title>
        <authorList>
            <person name="Rosenstein R."/>
            <person name="Nerz C."/>
            <person name="Biswas L."/>
            <person name="Resch A."/>
            <person name="Raddatz G."/>
            <person name="Schuster S.C."/>
            <person name="Goetz F."/>
        </authorList>
    </citation>
    <scope>NUCLEOTIDE SEQUENCE [LARGE SCALE GENOMIC DNA]</scope>
    <source>
        <strain>TM300</strain>
    </source>
</reference>
<reference key="3">
    <citation type="journal article" date="1991" name="Eur. J. Biochem.">
        <title>Staphylococcal phosphoenolpyruvate-dependent phosphotransferase system. Purification and protein sequencing of the Staphylococcus carnosus histidine-containing protein, and cloning and DNA sequencing of the ptsH gene.</title>
        <authorList>
            <person name="Eisermann R."/>
            <person name="Fischer R."/>
            <person name="Kessler U."/>
            <person name="Neubauer A."/>
            <person name="Hengstenberg W."/>
        </authorList>
    </citation>
    <scope>NUCLEOTIDE SEQUENCE [GENOMIC DNA] OF 1-90</scope>
</reference>
<reference key="4">
    <citation type="journal article" date="2006" name="J. Biol. Chem.">
        <title>Structure of the full-length enzyme I of the phosphoenolpyruvate-dependent sugar phosphotransferase system.</title>
        <authorList>
            <person name="Marquez J."/>
            <person name="Reinelt S."/>
            <person name="Koch B."/>
            <person name="Engelmann R."/>
            <person name="Hengstenberg W."/>
            <person name="Scheffzek K."/>
        </authorList>
    </citation>
    <scope>X-RAY CRYSTALLOGRAPHY (2.5 ANGSTROMS) IN COMPLEX WITH SUBSTRATE ANALOG</scope>
    <scope>SUBUNIT</scope>
    <scope>ACTIVE SITE</scope>
</reference>
<sequence>MAKQIKGIAASDGVAIAKAYLLVEPDLSFDNESVTDTDAEVAKFNGALNKSKVELTKIRNNAEKQLGADKAAIFDAHLLVLEDPELIQPIEDKIKNESVNAAQALTDVSNQFITIFESMDNEYMAERAADIRDVSKRVLAHILGVELPNPSIVDESVVIIGNDLTPSDTAQLNKEYVQGFVTNIGGRTSHSAIMSRSLEIPAVVGTKSITEEVEAGDTIVVDGMTGDVLINPSDEVIAEYQEKRENFFKDKQELQKLRDAESVTADGHHVELAANIGTPNDLPGVIENGAEGIGLYRTEFLYMGRDQMPTEEEQFEAYKAVLEAMKGKRVVVRTLDIGGDKELPYLDLPEEMNPFLGYRAIRLCLDQPEIFRPQLRALLRASVFGKLNIMFPMVATIQEFRDAKALLEEERANLKNEGYEVADDIELGIMVEIPSTAALADIFAKEVDFFSIGTNDLIQYTMAADRMSERVSYLYQPYNPAILRLVKQVIEASHAEGKWTGMCGEMAGDQTAIPLLLGLGLDEFSMSATSILKARRLIRSLNESEMKELSERAVQCATSEEVVDLVEEYTKNA</sequence>
<organism>
    <name type="scientific">Staphylococcus carnosus (strain TM300)</name>
    <dbReference type="NCBI Taxonomy" id="396513"/>
    <lineage>
        <taxon>Bacteria</taxon>
        <taxon>Bacillati</taxon>
        <taxon>Bacillota</taxon>
        <taxon>Bacilli</taxon>
        <taxon>Bacillales</taxon>
        <taxon>Staphylococcaceae</taxon>
        <taxon>Staphylococcus</taxon>
    </lineage>
</organism>